<reference key="1">
    <citation type="submission" date="1998-09" db="EMBL/GenBank/DDBJ databases">
        <title>Complete genomic sequence of vaccinia virus (Tian Tan strain).</title>
        <authorList>
            <person name="Jin Q."/>
            <person name="Hou Y.D."/>
            <person name="Cheng N.H."/>
            <person name="Yao E.M."/>
            <person name="Cheng S.X."/>
            <person name="Yang X.K."/>
            <person name="Jing D.Y."/>
            <person name="Yu W.H."/>
            <person name="Yuan J.S."/>
            <person name="Ma X.J."/>
        </authorList>
    </citation>
    <scope>NUCLEOTIDE SEQUENCE [LARGE SCALE GENOMIC DNA]</scope>
</reference>
<dbReference type="EMBL" id="AF095689">
    <property type="protein sequence ID" value="AAF33971.1"/>
    <property type="molecule type" value="Genomic_DNA"/>
</dbReference>
<dbReference type="Proteomes" id="UP000163220">
    <property type="component" value="Genome"/>
</dbReference>
<dbReference type="GO" id="GO:0044423">
    <property type="term" value="C:virion component"/>
    <property type="evidence" value="ECO:0007669"/>
    <property type="project" value="UniProtKB-KW"/>
</dbReference>
<dbReference type="InterPro" id="IPR007660">
    <property type="entry name" value="Poxvirus_D3"/>
</dbReference>
<dbReference type="Pfam" id="PF04580">
    <property type="entry name" value="Pox_D3"/>
    <property type="match status" value="1"/>
</dbReference>
<evidence type="ECO:0000250" key="1">
    <source>
        <dbReference type="UniProtKB" id="P04302"/>
    </source>
</evidence>
<evidence type="ECO:0000305" key="2"/>
<sequence>MDIFIVKDNKYPKVDNDDNEVFILLGNHNDFIRLKLTKLKEHVFFSEYIVTPDTYGSLCVELNGSSFQHGGRYIEVEEFIDAGRQVRWCSTSNHISKDIPEDMHTDKFVIYDIYTFEAFKNKRLVFVQVPPSLGDDSHLTNPLLSPYYRNSVARQMVNNMIFNQDSFLKYLLEHLIRSHYRVSKHITIVRYKDTEELNLTRICYNRDKFKAFVFAWFNGVSENEKVLDTYKKVSNLI</sequence>
<accession>Q9JFA5</accession>
<keyword id="KW-0426">Late protein</keyword>
<keyword id="KW-0946">Virion</keyword>
<comment type="function">
    <text evidence="1">Late protein which is part of a large complex required for early virion morphogenesis. This complex participates in the formation of virosomes and the incorporation of virosomal contents into nascent immature virions.</text>
</comment>
<comment type="subunit">
    <text evidence="1">Part of a complex composed of the kinase OPG054, OPG092, OPG100, OPG114, OPG115, OPG142 and OPG157.</text>
</comment>
<comment type="subcellular location">
    <subcellularLocation>
        <location evidence="1">Virion</location>
    </subcellularLocation>
    <text evidence="1">Localizes to the virion core.</text>
</comment>
<comment type="induction">
    <text>Expressed in the late phase of the viral replicative cycle.</text>
</comment>
<comment type="similarity">
    <text evidence="2">Belongs to the orthopoxvirus OPG115 family.</text>
</comment>
<gene>
    <name type="primary">OPG115</name>
    <name type="ORF">TD3R</name>
</gene>
<organismHost>
    <name type="scientific">Homo sapiens</name>
    <name type="common">Human</name>
    <dbReference type="NCBI Taxonomy" id="9606"/>
</organismHost>
<feature type="chain" id="PRO_0000099429" description="Core protein OPG115">
    <location>
        <begin position="1"/>
        <end position="237"/>
    </location>
</feature>
<name>PG115_VACCT</name>
<proteinExistence type="evidence at transcript level"/>
<organism>
    <name type="scientific">Vaccinia virus (strain Tian Tan)</name>
    <name type="common">VACV</name>
    <dbReference type="NCBI Taxonomy" id="10253"/>
    <lineage>
        <taxon>Viruses</taxon>
        <taxon>Varidnaviria</taxon>
        <taxon>Bamfordvirae</taxon>
        <taxon>Nucleocytoviricota</taxon>
        <taxon>Pokkesviricetes</taxon>
        <taxon>Chitovirales</taxon>
        <taxon>Poxviridae</taxon>
        <taxon>Chordopoxvirinae</taxon>
        <taxon>Orthopoxvirus</taxon>
        <taxon>Vaccinia virus</taxon>
    </lineage>
</organism>
<protein>
    <recommendedName>
        <fullName>Core protein OPG115</fullName>
    </recommendedName>
    <alternativeName>
        <fullName>27 kDa virion core protein</fullName>
    </alternativeName>
</protein>